<organism>
    <name type="scientific">Eimeria tenella</name>
    <name type="common">Coccidian parasite</name>
    <dbReference type="NCBI Taxonomy" id="5802"/>
    <lineage>
        <taxon>Eukaryota</taxon>
        <taxon>Sar</taxon>
        <taxon>Alveolata</taxon>
        <taxon>Apicomplexa</taxon>
        <taxon>Conoidasida</taxon>
        <taxon>Coccidia</taxon>
        <taxon>Eucoccidiorida</taxon>
        <taxon>Eimeriorina</taxon>
        <taxon>Eimeriidae</taxon>
        <taxon>Eimeria</taxon>
    </lineage>
</organism>
<name>RL5_EIMTE</name>
<proteinExistence type="evidence at transcript level"/>
<reference key="1">
    <citation type="journal article" date="2005" name="Mol. Biochem. Parasitol.">
        <title>De novo ribosome biosynthesis is transcriptionally regulated in Eimeria tenella, dependent on its life cycle stage.</title>
        <authorList>
            <person name="Schaap D."/>
            <person name="Arts G."/>
            <person name="van Poppel N.F."/>
            <person name="Vermeulen A.N."/>
        </authorList>
    </citation>
    <scope>NUCLEOTIDE SEQUENCE [MRNA]</scope>
    <source>
        <strain>Weybridge</strain>
    </source>
</reference>
<protein>
    <recommendedName>
        <fullName evidence="2">Large ribosomal subunit protein uL18</fullName>
    </recommendedName>
    <alternativeName>
        <fullName>60S ribosomal protein L5</fullName>
    </alternativeName>
</protein>
<accession>Q5EY89</accession>
<comment type="function">
    <text evidence="1">Component of the ribosome, a large ribonucleoprotein complex responsible for the synthesis of proteins in the cell. The small ribosomal subunit (SSU) binds messenger RNAs (mRNAs) and translates the encoded message by selecting cognate aminoacyl-transfer RNA (tRNA) molecules. The large subunit (LSU) contains the ribosomal catalytic site termed the peptidyl transferase center (PTC), which catalyzes the formation of peptide bonds, thereby polymerizing the amino acids delivered by tRNAs into a polypeptide chain. The nascent polypeptides leave the ribosome through a tunnel in the LSU and interact with protein factors that function in enzymatic processing, targeting, and the membrane insertion of nascent chains at the exit of the ribosomal tunnel.</text>
</comment>
<comment type="subunit">
    <text evidence="1">Component of the large ribosomal subunit (LSU).</text>
</comment>
<comment type="subcellular location">
    <subcellularLocation>
        <location evidence="1">Cytoplasm</location>
    </subcellularLocation>
    <subcellularLocation>
        <location evidence="1">Nucleus</location>
    </subcellularLocation>
</comment>
<comment type="similarity">
    <text evidence="2">Belongs to the universal ribosomal protein uL18 family.</text>
</comment>
<keyword id="KW-0963">Cytoplasm</keyword>
<keyword id="KW-0539">Nucleus</keyword>
<keyword id="KW-0687">Ribonucleoprotein</keyword>
<keyword id="KW-0689">Ribosomal protein</keyword>
<keyword id="KW-0694">RNA-binding</keyword>
<keyword id="KW-0699">rRNA-binding</keyword>
<sequence>MAFVKAIKNKAYFKRFQVKYRRRREGKTDYAARRRLILQDKNKYNAPKYRFVVRVTNSRVLCQVMYATLQGDRLVCSADSQELTRYGIKVGLTNYSAAYATGLLLARRLLKQKGLADEFKGLEKPSGEEYHIEEVSEERRPFKCVLDVGIVATTVGNRVFGAMKGACDGGLHIPHSNKRFPGFTKGEDGADDSYNPEVHRARIYGLHVAEYMRTLKEEDPERYQAQFSAYIRNKIDPDSIEKMYEEAFQKIRANPDPVKKEAREVKRVRQGAMIKTAKSQYVRNVKLDKETRKERVLKKIQMVADKMAEEE</sequence>
<dbReference type="EMBL" id="AY588943">
    <property type="protein sequence ID" value="AAT97351.1"/>
    <property type="molecule type" value="mRNA"/>
</dbReference>
<dbReference type="RefSeq" id="XP_013228068.1">
    <property type="nucleotide sequence ID" value="XM_013372614.1"/>
</dbReference>
<dbReference type="SMR" id="Q5EY89"/>
<dbReference type="VEuPathDB" id="ToxoDB:ETH2_1353100"/>
<dbReference type="VEuPathDB" id="ToxoDB:ETH_00022955"/>
<dbReference type="OMA" id="CQIASAH"/>
<dbReference type="OrthoDB" id="1618453at2759"/>
<dbReference type="GO" id="GO:0022625">
    <property type="term" value="C:cytosolic large ribosomal subunit"/>
    <property type="evidence" value="ECO:0007669"/>
    <property type="project" value="TreeGrafter"/>
</dbReference>
<dbReference type="GO" id="GO:0005634">
    <property type="term" value="C:nucleus"/>
    <property type="evidence" value="ECO:0007669"/>
    <property type="project" value="UniProtKB-SubCell"/>
</dbReference>
<dbReference type="GO" id="GO:0008097">
    <property type="term" value="F:5S rRNA binding"/>
    <property type="evidence" value="ECO:0007669"/>
    <property type="project" value="InterPro"/>
</dbReference>
<dbReference type="GO" id="GO:0003735">
    <property type="term" value="F:structural constituent of ribosome"/>
    <property type="evidence" value="ECO:0007669"/>
    <property type="project" value="InterPro"/>
</dbReference>
<dbReference type="GO" id="GO:0000027">
    <property type="term" value="P:ribosomal large subunit assembly"/>
    <property type="evidence" value="ECO:0007669"/>
    <property type="project" value="TreeGrafter"/>
</dbReference>
<dbReference type="GO" id="GO:0006412">
    <property type="term" value="P:translation"/>
    <property type="evidence" value="ECO:0007669"/>
    <property type="project" value="InterPro"/>
</dbReference>
<dbReference type="CDD" id="cd00432">
    <property type="entry name" value="Ribosomal_L18_L5e"/>
    <property type="match status" value="1"/>
</dbReference>
<dbReference type="FunFam" id="3.30.420.100:FF:000002">
    <property type="entry name" value="60S ribosomal protein L5"/>
    <property type="match status" value="1"/>
</dbReference>
<dbReference type="Gene3D" id="3.30.420.100">
    <property type="match status" value="1"/>
</dbReference>
<dbReference type="HAMAP" id="MF_01337_A">
    <property type="entry name" value="Ribosomal_uL18_A"/>
    <property type="match status" value="1"/>
</dbReference>
<dbReference type="InterPro" id="IPR005485">
    <property type="entry name" value="Rbsml_uL18_euk"/>
</dbReference>
<dbReference type="InterPro" id="IPR025607">
    <property type="entry name" value="Ribosomal_uL18_C_euk"/>
</dbReference>
<dbReference type="PANTHER" id="PTHR23410:SF12">
    <property type="entry name" value="LARGE RIBOSOMAL SUBUNIT PROTEIN UL18"/>
    <property type="match status" value="1"/>
</dbReference>
<dbReference type="PANTHER" id="PTHR23410">
    <property type="entry name" value="RIBOSOMAL PROTEIN L5-RELATED"/>
    <property type="match status" value="1"/>
</dbReference>
<dbReference type="Pfam" id="PF14204">
    <property type="entry name" value="Ribosomal_L18_c"/>
    <property type="match status" value="1"/>
</dbReference>
<dbReference type="Pfam" id="PF17144">
    <property type="entry name" value="Ribosomal_L5e"/>
    <property type="match status" value="1"/>
</dbReference>
<dbReference type="PRINTS" id="PR00058">
    <property type="entry name" value="RIBOSOMALL5"/>
</dbReference>
<dbReference type="SUPFAM" id="SSF53137">
    <property type="entry name" value="Translational machinery components"/>
    <property type="match status" value="1"/>
</dbReference>
<feature type="chain" id="PRO_0000291564" description="Large ribosomal subunit protein uL18">
    <location>
        <begin position="1"/>
        <end position="311"/>
    </location>
</feature>
<gene>
    <name type="primary">RPL5</name>
</gene>
<evidence type="ECO:0000250" key="1">
    <source>
        <dbReference type="UniProtKB" id="P26321"/>
    </source>
</evidence>
<evidence type="ECO:0000305" key="2"/>